<evidence type="ECO:0000255" key="1">
    <source>
        <dbReference type="HAMAP-Rule" id="MF_00984"/>
    </source>
</evidence>
<evidence type="ECO:0000256" key="2">
    <source>
        <dbReference type="SAM" id="MobiDB-lite"/>
    </source>
</evidence>
<sequence>MNKVVLIGRLTKDPELRFAAGSGTAVARFTLAVNRQFKKDEADFISCIAFGKTGETIAQYITKGRQLAVSGNIRTGSYEAQDGTRRYTTDVVVESFDFIDSGNGGARGNSGFGSGNDFGGSFGMPDNSFSDSSFNSNDDMTPIDDGDIPF</sequence>
<proteinExistence type="inferred from homology"/>
<gene>
    <name type="primary">ssb</name>
    <name type="ordered locus">CPE2641</name>
</gene>
<organism>
    <name type="scientific">Clostridium perfringens (strain 13 / Type A)</name>
    <dbReference type="NCBI Taxonomy" id="195102"/>
    <lineage>
        <taxon>Bacteria</taxon>
        <taxon>Bacillati</taxon>
        <taxon>Bacillota</taxon>
        <taxon>Clostridia</taxon>
        <taxon>Eubacteriales</taxon>
        <taxon>Clostridiaceae</taxon>
        <taxon>Clostridium</taxon>
    </lineage>
</organism>
<protein>
    <recommendedName>
        <fullName evidence="1">Single-stranded DNA-binding protein</fullName>
        <shortName evidence="1">SSB</shortName>
    </recommendedName>
</protein>
<reference key="1">
    <citation type="journal article" date="2002" name="Proc. Natl. Acad. Sci. U.S.A.">
        <title>Complete genome sequence of Clostridium perfringens, an anaerobic flesh-eater.</title>
        <authorList>
            <person name="Shimizu T."/>
            <person name="Ohtani K."/>
            <person name="Hirakawa H."/>
            <person name="Ohshima K."/>
            <person name="Yamashita A."/>
            <person name="Shiba T."/>
            <person name="Ogasawara N."/>
            <person name="Hattori M."/>
            <person name="Kuhara S."/>
            <person name="Hayashi H."/>
        </authorList>
    </citation>
    <scope>NUCLEOTIDE SEQUENCE [LARGE SCALE GENOMIC DNA]</scope>
    <source>
        <strain>13 / Type A</strain>
    </source>
</reference>
<comment type="subunit">
    <text evidence="1">Homotetramer.</text>
</comment>
<dbReference type="EMBL" id="BA000016">
    <property type="protein sequence ID" value="BAB82347.1"/>
    <property type="molecule type" value="Genomic_DNA"/>
</dbReference>
<dbReference type="RefSeq" id="WP_003451037.1">
    <property type="nucleotide sequence ID" value="NC_003366.1"/>
</dbReference>
<dbReference type="SMR" id="Q8XH44"/>
<dbReference type="STRING" id="195102.gene:10491985"/>
<dbReference type="KEGG" id="cpe:CPE2641"/>
<dbReference type="HOGENOM" id="CLU_078758_6_2_9"/>
<dbReference type="Proteomes" id="UP000000818">
    <property type="component" value="Chromosome"/>
</dbReference>
<dbReference type="GO" id="GO:0009295">
    <property type="term" value="C:nucleoid"/>
    <property type="evidence" value="ECO:0007669"/>
    <property type="project" value="TreeGrafter"/>
</dbReference>
<dbReference type="GO" id="GO:0003697">
    <property type="term" value="F:single-stranded DNA binding"/>
    <property type="evidence" value="ECO:0007669"/>
    <property type="project" value="UniProtKB-UniRule"/>
</dbReference>
<dbReference type="GO" id="GO:0006260">
    <property type="term" value="P:DNA replication"/>
    <property type="evidence" value="ECO:0007669"/>
    <property type="project" value="InterPro"/>
</dbReference>
<dbReference type="CDD" id="cd04496">
    <property type="entry name" value="SSB_OBF"/>
    <property type="match status" value="1"/>
</dbReference>
<dbReference type="Gene3D" id="2.40.50.140">
    <property type="entry name" value="Nucleic acid-binding proteins"/>
    <property type="match status" value="1"/>
</dbReference>
<dbReference type="HAMAP" id="MF_00984">
    <property type="entry name" value="SSB"/>
    <property type="match status" value="1"/>
</dbReference>
<dbReference type="InterPro" id="IPR012340">
    <property type="entry name" value="NA-bd_OB-fold"/>
</dbReference>
<dbReference type="InterPro" id="IPR000424">
    <property type="entry name" value="Primosome_PriB/ssb"/>
</dbReference>
<dbReference type="InterPro" id="IPR011344">
    <property type="entry name" value="ssDNA-bd"/>
</dbReference>
<dbReference type="NCBIfam" id="TIGR00621">
    <property type="entry name" value="ssb"/>
    <property type="match status" value="1"/>
</dbReference>
<dbReference type="PANTHER" id="PTHR10302">
    <property type="entry name" value="SINGLE-STRANDED DNA-BINDING PROTEIN"/>
    <property type="match status" value="1"/>
</dbReference>
<dbReference type="PANTHER" id="PTHR10302:SF27">
    <property type="entry name" value="SINGLE-STRANDED DNA-BINDING PROTEIN"/>
    <property type="match status" value="1"/>
</dbReference>
<dbReference type="Pfam" id="PF00436">
    <property type="entry name" value="SSB"/>
    <property type="match status" value="1"/>
</dbReference>
<dbReference type="SUPFAM" id="SSF50249">
    <property type="entry name" value="Nucleic acid-binding proteins"/>
    <property type="match status" value="1"/>
</dbReference>
<dbReference type="PROSITE" id="PS50935">
    <property type="entry name" value="SSB"/>
    <property type="match status" value="1"/>
</dbReference>
<keyword id="KW-0238">DNA-binding</keyword>
<keyword id="KW-1185">Reference proteome</keyword>
<accession>Q8XH44</accession>
<name>SSB_CLOPE</name>
<feature type="chain" id="PRO_0000096031" description="Single-stranded DNA-binding protein">
    <location>
        <begin position="1"/>
        <end position="150"/>
    </location>
</feature>
<feature type="domain" description="SSB" evidence="1">
    <location>
        <begin position="1"/>
        <end position="100"/>
    </location>
</feature>
<feature type="region of interest" description="Disordered" evidence="2">
    <location>
        <begin position="129"/>
        <end position="150"/>
    </location>
</feature>
<feature type="compositionally biased region" description="Low complexity" evidence="2">
    <location>
        <begin position="129"/>
        <end position="139"/>
    </location>
</feature>
<feature type="compositionally biased region" description="Acidic residues" evidence="2">
    <location>
        <begin position="141"/>
        <end position="150"/>
    </location>
</feature>